<evidence type="ECO:0000250" key="1">
    <source>
        <dbReference type="UniProtKB" id="O75907"/>
    </source>
</evidence>
<evidence type="ECO:0000250" key="2">
    <source>
        <dbReference type="UniProtKB" id="Q5GKZ7"/>
    </source>
</evidence>
<evidence type="ECO:0000255" key="3"/>
<evidence type="ECO:0000256" key="4">
    <source>
        <dbReference type="SAM" id="MobiDB-lite"/>
    </source>
</evidence>
<evidence type="ECO:0000305" key="5"/>
<evidence type="ECO:0000312" key="6">
    <source>
        <dbReference type="EMBL" id="KRH37423.1"/>
    </source>
</evidence>
<feature type="chain" id="PRO_0000438907" description="Diacylglycerol O-acyltransferase 1C">
    <location>
        <begin position="1"/>
        <end position="517"/>
    </location>
</feature>
<feature type="transmembrane region" description="Helical" evidence="3">
    <location>
        <begin position="121"/>
        <end position="141"/>
    </location>
</feature>
<feature type="transmembrane region" description="Helical" evidence="3">
    <location>
        <begin position="165"/>
        <end position="185"/>
    </location>
</feature>
<feature type="transmembrane region" description="Helical" evidence="3">
    <location>
        <begin position="197"/>
        <end position="217"/>
    </location>
</feature>
<feature type="transmembrane region" description="Helical" evidence="3">
    <location>
        <begin position="222"/>
        <end position="242"/>
    </location>
</feature>
<feature type="transmembrane region" description="Helical" evidence="3">
    <location>
        <begin position="272"/>
        <end position="292"/>
    </location>
</feature>
<feature type="transmembrane region" description="Helical" evidence="3">
    <location>
        <begin position="305"/>
        <end position="325"/>
    </location>
</feature>
<feature type="transmembrane region" description="Helical" evidence="3">
    <location>
        <begin position="361"/>
        <end position="381"/>
    </location>
</feature>
<feature type="transmembrane region" description="Helical" evidence="3">
    <location>
        <begin position="429"/>
        <end position="449"/>
    </location>
</feature>
<feature type="transmembrane region" description="Helical" evidence="3">
    <location>
        <begin position="451"/>
        <end position="471"/>
    </location>
</feature>
<feature type="transmembrane region" description="Helical" evidence="3">
    <location>
        <begin position="484"/>
        <end position="504"/>
    </location>
</feature>
<feature type="region of interest" description="Disordered" evidence="4">
    <location>
        <begin position="1"/>
        <end position="82"/>
    </location>
</feature>
<feature type="short sequence motif" description="FYXDWWN motif" evidence="1">
    <location>
        <begin position="388"/>
        <end position="394"/>
    </location>
</feature>
<feature type="compositionally biased region" description="Low complexity" evidence="4">
    <location>
        <begin position="8"/>
        <end position="17"/>
    </location>
</feature>
<feature type="compositionally biased region" description="Basic and acidic residues" evidence="4">
    <location>
        <begin position="53"/>
        <end position="64"/>
    </location>
</feature>
<feature type="compositionally biased region" description="Low complexity" evidence="4">
    <location>
        <begin position="71"/>
        <end position="81"/>
    </location>
</feature>
<feature type="active site" evidence="1">
    <location>
        <position position="443"/>
    </location>
</feature>
<feature type="sequence conflict" description="In Ref. 2; AAT73629." evidence="5" ref="2">
    <original>R</original>
    <variation>Q</variation>
    <location>
        <position position="138"/>
    </location>
</feature>
<feature type="sequence conflict" description="In Ref. 2; AAT73629." evidence="5" ref="2">
    <original>L</original>
    <variation>S</variation>
    <location>
        <position position="150"/>
    </location>
</feature>
<feature type="sequence conflict" description="In Ref. 2; AAT73629." evidence="5" ref="2">
    <original>Q</original>
    <variation>R</variation>
    <location>
        <position position="334"/>
    </location>
</feature>
<feature type="sequence conflict" description="In Ref. 2; AAT73629." evidence="5" ref="2">
    <original>F</original>
    <variation>S</variation>
    <location>
        <position position="419"/>
    </location>
</feature>
<sequence>MAISDVPAAAGTTATTTSDSDLRQPSLRRRSSAGVLFDAARDSGSDNSLTGKITDDDNIKDHKPNNHAASDDNVGAAANDAGQEHRQPVADFKYAYRPSVPAHRRIKESPLSSDNIFRQSHAGLFNLCIVVLVAVNSRLIIENLMKYGWLIKYGFWFSSKSLRDWPLFMCCLSLAIFPLAAFVVERLAQQKCISEPVVVLLHLIISTVELCYPVLVILRCDSAFVSGVTLMLLTCIVWLKLVSYAHTNYDMRALTVSNEKGETLPNTLIMEYPYTVTFRSLAYFMVAPTLCYQTSYPRTPSVRKGWVFRQLVKLIIFTGVMGFIIEQYMNPIVQNSTHPLKGNLLYAIERILKLSVPNVYVWLCMFYCFFHLWLNILAELVRFGDREFYKDWWNAKTVEEYWRMWNMPVHKWMVRHIYFPCLRRGIPKGAASLIAFLVSAVFHELCIAVPCHMFKLWAFIGIMFQVPLVLITNYLQNKYRNSMVGNMIFWFIFCILGQPMSVLLYYHDLMNRKGEVD</sequence>
<proteinExistence type="evidence at transcript level"/>
<name>DAT1C_SOYBN</name>
<comment type="function">
    <text evidence="2">Involved in triacylglycerol (TAG) synthesis. Catalyzes the acylation of the sn-3 hydroxy group of sn-1,2-diacylglycerol using acyl-CoA.</text>
</comment>
<comment type="catalytic activity">
    <reaction evidence="5">
        <text>an acyl-CoA + a 1,2-diacyl-sn-glycerol = a triacyl-sn-glycerol + CoA</text>
        <dbReference type="Rhea" id="RHEA:10868"/>
        <dbReference type="ChEBI" id="CHEBI:17815"/>
        <dbReference type="ChEBI" id="CHEBI:57287"/>
        <dbReference type="ChEBI" id="CHEBI:58342"/>
        <dbReference type="ChEBI" id="CHEBI:64615"/>
        <dbReference type="EC" id="2.3.1.20"/>
    </reaction>
</comment>
<comment type="pathway">
    <text evidence="5">Glycerolipid metabolism; triacylglycerol biosynthesis.</text>
</comment>
<comment type="subcellular location">
    <subcellularLocation>
        <location evidence="2">Endoplasmic reticulum membrane</location>
        <topology evidence="3">Multi-pass membrane protein</topology>
    </subcellularLocation>
</comment>
<comment type="similarity">
    <text evidence="5">Belongs to the membrane-bound acyltransferase family. Sterol o-acyltransferase subfamily.</text>
</comment>
<organism>
    <name type="scientific">Glycine max</name>
    <name type="common">Soybean</name>
    <name type="synonym">Glycine hispida</name>
    <dbReference type="NCBI Taxonomy" id="3847"/>
    <lineage>
        <taxon>Eukaryota</taxon>
        <taxon>Viridiplantae</taxon>
        <taxon>Streptophyta</taxon>
        <taxon>Embryophyta</taxon>
        <taxon>Tracheophyta</taxon>
        <taxon>Spermatophyta</taxon>
        <taxon>Magnoliopsida</taxon>
        <taxon>eudicotyledons</taxon>
        <taxon>Gunneridae</taxon>
        <taxon>Pentapetalae</taxon>
        <taxon>rosids</taxon>
        <taxon>fabids</taxon>
        <taxon>Fabales</taxon>
        <taxon>Fabaceae</taxon>
        <taxon>Papilionoideae</taxon>
        <taxon>50 kb inversion clade</taxon>
        <taxon>NPAAA clade</taxon>
        <taxon>indigoferoid/millettioid clade</taxon>
        <taxon>Phaseoleae</taxon>
        <taxon>Glycine</taxon>
        <taxon>Glycine subgen. Soja</taxon>
    </lineage>
</organism>
<gene>
    <name evidence="5" type="primary">DGAT1C</name>
    <name evidence="6" type="ordered locus">Glyma09g07520</name>
</gene>
<protein>
    <recommendedName>
        <fullName evidence="5">Diacylglycerol O-acyltransferase 1C</fullName>
        <shortName evidence="5">GmDGAT1C</shortName>
        <ecNumber evidence="5">2.3.1.20</ecNumber>
    </recommendedName>
</protein>
<reference key="1">
    <citation type="journal article" date="2010" name="Nature">
        <title>Genome sequence of the palaeopolyploid soybean.</title>
        <authorList>
            <person name="Schmutz J."/>
            <person name="Cannon S.B."/>
            <person name="Schlueter J."/>
            <person name="Ma J."/>
            <person name="Mitros T."/>
            <person name="Nelson W."/>
            <person name="Hyten D.L."/>
            <person name="Song Q."/>
            <person name="Thelen J.J."/>
            <person name="Cheng J."/>
            <person name="Xu D."/>
            <person name="Hellsten U."/>
            <person name="May G.D."/>
            <person name="Yu Y."/>
            <person name="Sakurai T."/>
            <person name="Umezawa T."/>
            <person name="Bhattacharyya M.K."/>
            <person name="Sandhu D."/>
            <person name="Valliyodan B."/>
            <person name="Lindquist E."/>
            <person name="Peto M."/>
            <person name="Grant D."/>
            <person name="Shu S."/>
            <person name="Goodstein D."/>
            <person name="Barry K."/>
            <person name="Futrell-Griggs M."/>
            <person name="Abernathy B."/>
            <person name="Du J."/>
            <person name="Tian Z."/>
            <person name="Zhu L."/>
            <person name="Gill N."/>
            <person name="Joshi T."/>
            <person name="Libault M."/>
            <person name="Sethuraman A."/>
            <person name="Zhang X.-C."/>
            <person name="Shinozaki K."/>
            <person name="Nguyen H.T."/>
            <person name="Wing R.A."/>
            <person name="Cregan P."/>
            <person name="Specht J."/>
            <person name="Grimwood J."/>
            <person name="Rokhsar D."/>
            <person name="Stacey G."/>
            <person name="Shoemaker R.C."/>
            <person name="Jackson S.A."/>
        </authorList>
    </citation>
    <scope>NUCLEOTIDE SEQUENCE [LARGE SCALE GENOMIC DNA]</scope>
    <source>
        <strain>cv. Williams 82</strain>
    </source>
</reference>
<reference key="2">
    <citation type="submission" date="2004-06" db="EMBL/GenBank/DDBJ databases">
        <title>Cloning and functional analysis of soybean diacylglycerol O-acyltransferase gene by RNAi.</title>
        <authorList>
            <person name="Zhang F."/>
            <person name="Yang M."/>
            <person name="Xu Y."/>
        </authorList>
    </citation>
    <scope>NUCLEOTIDE SEQUENCE [MRNA] OF 112-517</scope>
</reference>
<dbReference type="EC" id="2.3.1.20" evidence="5"/>
<dbReference type="EMBL" id="CM000842">
    <property type="protein sequence ID" value="KRH37423.1"/>
    <property type="molecule type" value="Genomic_DNA"/>
</dbReference>
<dbReference type="EMBL" id="AY652765">
    <property type="protein sequence ID" value="AAT73629.1"/>
    <property type="molecule type" value="mRNA"/>
</dbReference>
<dbReference type="SMR" id="K7LC65"/>
<dbReference type="FunCoup" id="K7LC65">
    <property type="interactions" value="2714"/>
</dbReference>
<dbReference type="STRING" id="3847.K7LC65"/>
<dbReference type="PaxDb" id="3847-GLYMA09G07520.2"/>
<dbReference type="EnsemblPlants" id="KRH37423">
    <property type="protein sequence ID" value="KRH37423"/>
    <property type="gene ID" value="GLYMA_09G065300"/>
</dbReference>
<dbReference type="Gramene" id="KRH37423">
    <property type="protein sequence ID" value="KRH37423"/>
    <property type="gene ID" value="GLYMA_09G065300"/>
</dbReference>
<dbReference type="eggNOG" id="KOG0380">
    <property type="taxonomic scope" value="Eukaryota"/>
</dbReference>
<dbReference type="HOGENOM" id="CLU_018190_0_1_1"/>
<dbReference type="InParanoid" id="K7LC65"/>
<dbReference type="OrthoDB" id="10039049at2759"/>
<dbReference type="UniPathway" id="UPA00282"/>
<dbReference type="Proteomes" id="UP000008827">
    <property type="component" value="Chromosome 9"/>
</dbReference>
<dbReference type="GO" id="GO:0009941">
    <property type="term" value="C:chloroplast envelope"/>
    <property type="evidence" value="ECO:0000318"/>
    <property type="project" value="GO_Central"/>
</dbReference>
<dbReference type="GO" id="GO:0005789">
    <property type="term" value="C:endoplasmic reticulum membrane"/>
    <property type="evidence" value="ECO:0000250"/>
    <property type="project" value="UniProtKB"/>
</dbReference>
<dbReference type="GO" id="GO:0004144">
    <property type="term" value="F:diacylglycerol O-acyltransferase activity"/>
    <property type="evidence" value="ECO:0000250"/>
    <property type="project" value="UniProtKB"/>
</dbReference>
<dbReference type="GO" id="GO:0019432">
    <property type="term" value="P:triglyceride biosynthetic process"/>
    <property type="evidence" value="ECO:0000250"/>
    <property type="project" value="UniProtKB"/>
</dbReference>
<dbReference type="InterPro" id="IPR027251">
    <property type="entry name" value="Diacylglycerol_acylTrfase1"/>
</dbReference>
<dbReference type="InterPro" id="IPR004299">
    <property type="entry name" value="MBOAT_fam"/>
</dbReference>
<dbReference type="InterPro" id="IPR014371">
    <property type="entry name" value="Oat_ACAT_DAG_ARE"/>
</dbReference>
<dbReference type="PANTHER" id="PTHR10408:SF7">
    <property type="entry name" value="DIACYLGLYCEROL O-ACYLTRANSFERASE 1"/>
    <property type="match status" value="1"/>
</dbReference>
<dbReference type="PANTHER" id="PTHR10408">
    <property type="entry name" value="STEROL O-ACYLTRANSFERASE"/>
    <property type="match status" value="1"/>
</dbReference>
<dbReference type="Pfam" id="PF03062">
    <property type="entry name" value="MBOAT"/>
    <property type="match status" value="1"/>
</dbReference>
<dbReference type="PIRSF" id="PIRSF000439">
    <property type="entry name" value="Oat_ACAT_DAG_ARE"/>
    <property type="match status" value="1"/>
</dbReference>
<dbReference type="PIRSF" id="PIRSF500231">
    <property type="entry name" value="Oat_dag"/>
    <property type="match status" value="1"/>
</dbReference>
<keyword id="KW-0012">Acyltransferase</keyword>
<keyword id="KW-0256">Endoplasmic reticulum</keyword>
<keyword id="KW-0472">Membrane</keyword>
<keyword id="KW-1185">Reference proteome</keyword>
<keyword id="KW-0808">Transferase</keyword>
<keyword id="KW-0812">Transmembrane</keyword>
<keyword id="KW-1133">Transmembrane helix</keyword>
<accession>K7LC65</accession>
<accession>Q6DNG7</accession>